<gene>
    <name type="primary">FEN2</name>
    <name type="ordered locus">YCR028C</name>
    <name type="ORF">YCR28C</name>
</gene>
<keyword id="KW-1003">Cell membrane</keyword>
<keyword id="KW-0472">Membrane</keyword>
<keyword id="KW-1185">Reference proteome</keyword>
<keyword id="KW-0812">Transmembrane</keyword>
<keyword id="KW-1133">Transmembrane helix</keyword>
<keyword id="KW-0813">Transport</keyword>
<name>FEN2_YEAST</name>
<dbReference type="EMBL" id="X59720">
    <property type="protein sequence ID" value="CAA42320.1"/>
    <property type="molecule type" value="Genomic_DNA"/>
</dbReference>
<dbReference type="EMBL" id="BK006937">
    <property type="protein sequence ID" value="DAA07507.1"/>
    <property type="molecule type" value="Genomic_DNA"/>
</dbReference>
<dbReference type="PIR" id="S19439">
    <property type="entry name" value="S19439"/>
</dbReference>
<dbReference type="RefSeq" id="NP_009957.1">
    <property type="nucleotide sequence ID" value="NM_001178743.1"/>
</dbReference>
<dbReference type="SMR" id="P25621"/>
<dbReference type="BioGRID" id="31011">
    <property type="interactions" value="46"/>
</dbReference>
<dbReference type="DIP" id="DIP-7672N"/>
<dbReference type="FunCoup" id="P25621">
    <property type="interactions" value="41"/>
</dbReference>
<dbReference type="IntAct" id="P25621">
    <property type="interactions" value="7"/>
</dbReference>
<dbReference type="MINT" id="P25621"/>
<dbReference type="STRING" id="4932.YCR028C"/>
<dbReference type="TCDB" id="2.A.1.14.18">
    <property type="family name" value="the major facilitator superfamily (mfs)"/>
</dbReference>
<dbReference type="iPTMnet" id="P25621"/>
<dbReference type="PaxDb" id="4932-YCR028C"/>
<dbReference type="PeptideAtlas" id="P25621"/>
<dbReference type="EnsemblFungi" id="YCR028C_mRNA">
    <property type="protein sequence ID" value="YCR028C"/>
    <property type="gene ID" value="YCR028C"/>
</dbReference>
<dbReference type="GeneID" id="850394"/>
<dbReference type="KEGG" id="sce:YCR028C"/>
<dbReference type="AGR" id="SGD:S000000623"/>
<dbReference type="SGD" id="S000000623">
    <property type="gene designation" value="FEN2"/>
</dbReference>
<dbReference type="VEuPathDB" id="FungiDB:YCR028C"/>
<dbReference type="eggNOG" id="KOG2533">
    <property type="taxonomic scope" value="Eukaryota"/>
</dbReference>
<dbReference type="HOGENOM" id="CLU_001265_4_2_1"/>
<dbReference type="InParanoid" id="P25621"/>
<dbReference type="OMA" id="FTTWYWW"/>
<dbReference type="OrthoDB" id="3639251at2759"/>
<dbReference type="BioCyc" id="YEAST:G3O-29343-MONOMER"/>
<dbReference type="BioGRID-ORCS" id="850394">
    <property type="hits" value="1 hit in 10 CRISPR screens"/>
</dbReference>
<dbReference type="PRO" id="PR:P25621"/>
<dbReference type="Proteomes" id="UP000002311">
    <property type="component" value="Chromosome III"/>
</dbReference>
<dbReference type="RNAct" id="P25621">
    <property type="molecule type" value="protein"/>
</dbReference>
<dbReference type="GO" id="GO:0071944">
    <property type="term" value="C:cell periphery"/>
    <property type="evidence" value="ECO:0007005"/>
    <property type="project" value="SGD"/>
</dbReference>
<dbReference type="GO" id="GO:0000324">
    <property type="term" value="C:fungal-type vacuole"/>
    <property type="evidence" value="ECO:0007005"/>
    <property type="project" value="SGD"/>
</dbReference>
<dbReference type="GO" id="GO:0000329">
    <property type="term" value="C:fungal-type vacuole membrane"/>
    <property type="evidence" value="ECO:0007005"/>
    <property type="project" value="SGD"/>
</dbReference>
<dbReference type="GO" id="GO:0005886">
    <property type="term" value="C:plasma membrane"/>
    <property type="evidence" value="ECO:0000315"/>
    <property type="project" value="SGD"/>
</dbReference>
<dbReference type="GO" id="GO:0015233">
    <property type="term" value="F:pantothenate transmembrane transporter activity"/>
    <property type="evidence" value="ECO:0000315"/>
    <property type="project" value="SGD"/>
</dbReference>
<dbReference type="GO" id="GO:0006897">
    <property type="term" value="P:endocytosis"/>
    <property type="evidence" value="ECO:0000315"/>
    <property type="project" value="SGD"/>
</dbReference>
<dbReference type="GO" id="GO:0098717">
    <property type="term" value="P:pantothenate import across plasma membrane"/>
    <property type="evidence" value="ECO:0000318"/>
    <property type="project" value="GO_Central"/>
</dbReference>
<dbReference type="GO" id="GO:0015887">
    <property type="term" value="P:pantothenate transmembrane transport"/>
    <property type="evidence" value="ECO:0000315"/>
    <property type="project" value="SGD"/>
</dbReference>
<dbReference type="CDD" id="cd17327">
    <property type="entry name" value="MFS_FEN2_like"/>
    <property type="match status" value="1"/>
</dbReference>
<dbReference type="FunFam" id="1.20.1250.20:FF:000065">
    <property type="entry name" value="Putative MFS pantothenate transporter"/>
    <property type="match status" value="1"/>
</dbReference>
<dbReference type="Gene3D" id="1.20.1250.20">
    <property type="entry name" value="MFS general substrate transporter like domains"/>
    <property type="match status" value="1"/>
</dbReference>
<dbReference type="InterPro" id="IPR011701">
    <property type="entry name" value="MFS"/>
</dbReference>
<dbReference type="InterPro" id="IPR036259">
    <property type="entry name" value="MFS_trans_sf"/>
</dbReference>
<dbReference type="PANTHER" id="PTHR43791:SF4">
    <property type="entry name" value="PANTOTHENATE TRANSPORTER FEN2"/>
    <property type="match status" value="1"/>
</dbReference>
<dbReference type="PANTHER" id="PTHR43791">
    <property type="entry name" value="PERMEASE-RELATED"/>
    <property type="match status" value="1"/>
</dbReference>
<dbReference type="Pfam" id="PF07690">
    <property type="entry name" value="MFS_1"/>
    <property type="match status" value="1"/>
</dbReference>
<dbReference type="SUPFAM" id="SSF103473">
    <property type="entry name" value="MFS general substrate transporter"/>
    <property type="match status" value="1"/>
</dbReference>
<protein>
    <recommendedName>
        <fullName>Pantothenate transporter FEN2</fullName>
    </recommendedName>
    <alternativeName>
        <fullName>Fenpropimorph resistance protein 2</fullName>
    </alternativeName>
</protein>
<reference key="1">
    <citation type="journal article" date="1992" name="Yeast">
        <title>Nucleotide sequence of 9.2 kb left of CRY1 on yeast chromosome III from strain AB972: evidence for a Ty insertion and functional analysis of open reading frame YCR28.</title>
        <authorList>
            <person name="Carbone M.L.A."/>
            <person name="Panzeri L."/>
            <person name="Falconi M.M."/>
            <person name="Carcano C."/>
            <person name="Plevani P."/>
            <person name="Lucchini G."/>
        </authorList>
    </citation>
    <scope>NUCLEOTIDE SEQUENCE [GENOMIC DNA]</scope>
    <source>
        <strain>ATCC 204511 / S288c / AB972</strain>
    </source>
</reference>
<reference key="2">
    <citation type="journal article" date="1992" name="Nature">
        <title>The complete DNA sequence of yeast chromosome III.</title>
        <authorList>
            <person name="Oliver S.G."/>
            <person name="van der Aart Q.J.M."/>
            <person name="Agostoni-Carbone M.L."/>
            <person name="Aigle M."/>
            <person name="Alberghina L."/>
            <person name="Alexandraki D."/>
            <person name="Antoine G."/>
            <person name="Anwar R."/>
            <person name="Ballesta J.P.G."/>
            <person name="Benit P."/>
            <person name="Berben G."/>
            <person name="Bergantino E."/>
            <person name="Biteau N."/>
            <person name="Bolle P.-A."/>
            <person name="Bolotin-Fukuhara M."/>
            <person name="Brown A."/>
            <person name="Brown A.J.P."/>
            <person name="Buhler J.-M."/>
            <person name="Carcano C."/>
            <person name="Carignani G."/>
            <person name="Cederberg H."/>
            <person name="Chanet R."/>
            <person name="Contreras R."/>
            <person name="Crouzet M."/>
            <person name="Daignan-Fornier B."/>
            <person name="Defoor E."/>
            <person name="Delgado M.D."/>
            <person name="Demolder J."/>
            <person name="Doira C."/>
            <person name="Dubois E."/>
            <person name="Dujon B."/>
            <person name="Duesterhoeft A."/>
            <person name="Erdmann D."/>
            <person name="Esteban M."/>
            <person name="Fabre F."/>
            <person name="Fairhead C."/>
            <person name="Faye G."/>
            <person name="Feldmann H."/>
            <person name="Fiers W."/>
            <person name="Francingues-Gaillard M.-C."/>
            <person name="Franco L."/>
            <person name="Frontali L."/>
            <person name="Fukuhara H."/>
            <person name="Fuller L.J."/>
            <person name="Galland P."/>
            <person name="Gent M.E."/>
            <person name="Gigot D."/>
            <person name="Gilliquet V."/>
            <person name="Glansdorff N."/>
            <person name="Goffeau A."/>
            <person name="Grenson M."/>
            <person name="Grisanti P."/>
            <person name="Grivell L.A."/>
            <person name="de Haan M."/>
            <person name="Haasemann M."/>
            <person name="Hatat D."/>
            <person name="Hoenicka J."/>
            <person name="Hegemann J.H."/>
            <person name="Herbert C.J."/>
            <person name="Hilger F."/>
            <person name="Hohmann S."/>
            <person name="Hollenberg C.P."/>
            <person name="Huse K."/>
            <person name="Iborra F."/>
            <person name="Indge K.J."/>
            <person name="Isono K."/>
            <person name="Jacq C."/>
            <person name="Jacquet M."/>
            <person name="James C.M."/>
            <person name="Jauniaux J.-C."/>
            <person name="Jia Y."/>
            <person name="Jimenez A."/>
            <person name="Kelly A."/>
            <person name="Kleinhans U."/>
            <person name="Kreisl P."/>
            <person name="Lanfranchi G."/>
            <person name="Lewis C."/>
            <person name="van der Linden C.G."/>
            <person name="Lucchini G."/>
            <person name="Lutzenkirchen K."/>
            <person name="Maat M.J."/>
            <person name="Mallet L."/>
            <person name="Mannhaupt G."/>
            <person name="Martegani E."/>
            <person name="Mathieu A."/>
            <person name="Maurer C.T.C."/>
            <person name="McConnell D."/>
            <person name="McKee R.A."/>
            <person name="Messenguy F."/>
            <person name="Mewes H.-W."/>
            <person name="Molemans F."/>
            <person name="Montague M.A."/>
            <person name="Muzi Falconi M."/>
            <person name="Navas L."/>
            <person name="Newlon C.S."/>
            <person name="Noone D."/>
            <person name="Pallier C."/>
            <person name="Panzeri L."/>
            <person name="Pearson B.M."/>
            <person name="Perea J."/>
            <person name="Philippsen P."/>
            <person name="Pierard A."/>
            <person name="Planta R.J."/>
            <person name="Plevani P."/>
            <person name="Poetsch B."/>
            <person name="Pohl F.M."/>
            <person name="Purnelle B."/>
            <person name="Ramezani Rad M."/>
            <person name="Rasmussen S.W."/>
            <person name="Raynal A."/>
            <person name="Remacha M.A."/>
            <person name="Richterich P."/>
            <person name="Roberts A.B."/>
            <person name="Rodriguez F."/>
            <person name="Sanz E."/>
            <person name="Schaaff-Gerstenschlaeger I."/>
            <person name="Scherens B."/>
            <person name="Schweitzer B."/>
            <person name="Shu Y."/>
            <person name="Skala J."/>
            <person name="Slonimski P.P."/>
            <person name="Sor F."/>
            <person name="Soustelle C."/>
            <person name="Spiegelberg R."/>
            <person name="Stateva L.I."/>
            <person name="Steensma H.Y."/>
            <person name="Steiner S."/>
            <person name="Thierry A."/>
            <person name="Thireos G."/>
            <person name="Tzermia M."/>
            <person name="Urrestarazu L.A."/>
            <person name="Valle G."/>
            <person name="Vetter I."/>
            <person name="van Vliet-Reedijk J.C."/>
            <person name="Voet M."/>
            <person name="Volckaert G."/>
            <person name="Vreken P."/>
            <person name="Wang H."/>
            <person name="Warmington J.R."/>
            <person name="von Wettstein D."/>
            <person name="Wicksteed B.L."/>
            <person name="Wilson C."/>
            <person name="Wurst H."/>
            <person name="Xu G."/>
            <person name="Yoshikawa A."/>
            <person name="Zimmermann F.K."/>
            <person name="Sgouros J.G."/>
        </authorList>
    </citation>
    <scope>NUCLEOTIDE SEQUENCE [LARGE SCALE GENOMIC DNA]</scope>
    <source>
        <strain>ATCC 204508 / S288c</strain>
    </source>
</reference>
<reference key="3">
    <citation type="journal article" date="2014" name="G3 (Bethesda)">
        <title>The reference genome sequence of Saccharomyces cerevisiae: Then and now.</title>
        <authorList>
            <person name="Engel S.R."/>
            <person name="Dietrich F.S."/>
            <person name="Fisk D.G."/>
            <person name="Binkley G."/>
            <person name="Balakrishnan R."/>
            <person name="Costanzo M.C."/>
            <person name="Dwight S.S."/>
            <person name="Hitz B.C."/>
            <person name="Karra K."/>
            <person name="Nash R.S."/>
            <person name="Weng S."/>
            <person name="Wong E.D."/>
            <person name="Lloyd P."/>
            <person name="Skrzypek M.S."/>
            <person name="Miyasato S.R."/>
            <person name="Simison M."/>
            <person name="Cherry J.M."/>
        </authorList>
    </citation>
    <scope>GENOME REANNOTATION</scope>
    <source>
        <strain>ATCC 204508 / S288c</strain>
    </source>
</reference>
<reference key="4">
    <citation type="journal article" date="1994" name="EMBO J.">
        <title>Yeast chromosome III: new gene functions.</title>
        <authorList>
            <person name="Koonin E.V."/>
            <person name="Bork P."/>
            <person name="Sander C."/>
        </authorList>
    </citation>
    <scope>SIMILARITY TO DAL5 FAMILY</scope>
</reference>
<reference key="5">
    <citation type="journal article" date="1996" name="Yeast">
        <title>FEN2: a gene implicated in the catabolite repression-mediated regulation of ergosterol biosynthesis in yeast.</title>
        <authorList>
            <person name="Marcireau C."/>
            <person name="Joets J."/>
            <person name="Pousset D."/>
            <person name="Guilloton M."/>
            <person name="Karst F."/>
        </authorList>
    </citation>
    <scope>FUNCTION</scope>
</reference>
<reference key="6">
    <citation type="journal article" date="1999" name="J. Biol. Chem.">
        <title>The fenpropimorph resistance gene FEN2 from Saccharomyces cerevisiae encodes a plasma membrane H+-pantothenate symporter.</title>
        <authorList>
            <person name="Stolz J."/>
            <person name="Sauer N."/>
        </authorList>
    </citation>
    <scope>FUNCTION</scope>
    <scope>SUBCELLULAR LOCATION</scope>
</reference>
<reference key="7">
    <citation type="journal article" date="2003" name="Nature">
        <title>Global analysis of protein expression in yeast.</title>
        <authorList>
            <person name="Ghaemmaghami S."/>
            <person name="Huh W.-K."/>
            <person name="Bower K."/>
            <person name="Howson R.W."/>
            <person name="Belle A."/>
            <person name="Dephoure N."/>
            <person name="O'Shea E.K."/>
            <person name="Weissman J.S."/>
        </authorList>
    </citation>
    <scope>LEVEL OF PROTEIN EXPRESSION [LARGE SCALE ANALYSIS]</scope>
</reference>
<reference key="8">
    <citation type="journal article" date="2006" name="Proc. Natl. Acad. Sci. U.S.A.">
        <title>A global topology map of the Saccharomyces cerevisiae membrane proteome.</title>
        <authorList>
            <person name="Kim H."/>
            <person name="Melen K."/>
            <person name="Oesterberg M."/>
            <person name="von Heijne G."/>
        </authorList>
    </citation>
    <scope>TOPOLOGY [LARGE SCALE ANALYSIS]</scope>
    <source>
        <strain>ATCC 208353 / W303-1A</strain>
    </source>
</reference>
<proteinExistence type="evidence at protein level"/>
<organism>
    <name type="scientific">Saccharomyces cerevisiae (strain ATCC 204508 / S288c)</name>
    <name type="common">Baker's yeast</name>
    <dbReference type="NCBI Taxonomy" id="559292"/>
    <lineage>
        <taxon>Eukaryota</taxon>
        <taxon>Fungi</taxon>
        <taxon>Dikarya</taxon>
        <taxon>Ascomycota</taxon>
        <taxon>Saccharomycotina</taxon>
        <taxon>Saccharomycetes</taxon>
        <taxon>Saccharomycetales</taxon>
        <taxon>Saccharomycetaceae</taxon>
        <taxon>Saccharomyces</taxon>
    </lineage>
</organism>
<accession>P25621</accession>
<accession>D6VR38</accession>
<feature type="chain" id="PRO_0000121367" description="Pantothenate transporter FEN2">
    <location>
        <begin position="1"/>
        <end position="512"/>
    </location>
</feature>
<feature type="topological domain" description="Cytoplasmic" evidence="1">
    <location>
        <begin position="1"/>
        <end position="27"/>
    </location>
</feature>
<feature type="transmembrane region" description="Helical" evidence="1">
    <location>
        <begin position="28"/>
        <end position="48"/>
    </location>
</feature>
<feature type="topological domain" description="Extracellular" evidence="1">
    <location>
        <begin position="49"/>
        <end position="79"/>
    </location>
</feature>
<feature type="transmembrane region" description="Helical" evidence="1">
    <location>
        <begin position="80"/>
        <end position="100"/>
    </location>
</feature>
<feature type="topological domain" description="Cytoplasmic" evidence="1">
    <location>
        <begin position="101"/>
        <end position="102"/>
    </location>
</feature>
<feature type="transmembrane region" description="Helical" evidence="1">
    <location>
        <begin position="103"/>
        <end position="123"/>
    </location>
</feature>
<feature type="topological domain" description="Extracellular" evidence="1">
    <location>
        <begin position="124"/>
        <end position="132"/>
    </location>
</feature>
<feature type="transmembrane region" description="Helical" evidence="1">
    <location>
        <begin position="133"/>
        <end position="153"/>
    </location>
</feature>
<feature type="topological domain" description="Cytoplasmic" evidence="1">
    <location>
        <begin position="154"/>
        <end position="164"/>
    </location>
</feature>
<feature type="transmembrane region" description="Helical" evidence="1">
    <location>
        <begin position="165"/>
        <end position="185"/>
    </location>
</feature>
<feature type="topological domain" description="Extracellular" evidence="1">
    <location>
        <begin position="186"/>
        <end position="198"/>
    </location>
</feature>
<feature type="transmembrane region" description="Helical" evidence="1">
    <location>
        <begin position="199"/>
        <end position="219"/>
    </location>
</feature>
<feature type="topological domain" description="Cytoplasmic" evidence="1">
    <location>
        <begin position="220"/>
        <end position="271"/>
    </location>
</feature>
<feature type="transmembrane region" description="Helical" evidence="1">
    <location>
        <begin position="272"/>
        <end position="292"/>
    </location>
</feature>
<feature type="topological domain" description="Extracellular" evidence="1">
    <location>
        <begin position="293"/>
        <end position="312"/>
    </location>
</feature>
<feature type="transmembrane region" description="Helical" evidence="1">
    <location>
        <begin position="313"/>
        <end position="333"/>
    </location>
</feature>
<feature type="topological domain" description="Cytoplasmic" evidence="1">
    <location>
        <begin position="334"/>
        <end position="342"/>
    </location>
</feature>
<feature type="transmembrane region" description="Helical" evidence="1">
    <location>
        <begin position="343"/>
        <end position="363"/>
    </location>
</feature>
<feature type="topological domain" description="Extracellular" evidence="1">
    <location>
        <begin position="364"/>
        <end position="372"/>
    </location>
</feature>
<feature type="transmembrane region" description="Helical" evidence="1">
    <location>
        <begin position="373"/>
        <end position="393"/>
    </location>
</feature>
<feature type="topological domain" description="Cytoplasmic" evidence="1">
    <location>
        <begin position="394"/>
        <end position="401"/>
    </location>
</feature>
<feature type="transmembrane region" description="Helical" evidence="1">
    <location>
        <begin position="402"/>
        <end position="422"/>
    </location>
</feature>
<feature type="topological domain" description="Extracellular" evidence="1">
    <location>
        <begin position="423"/>
        <end position="434"/>
    </location>
</feature>
<feature type="transmembrane region" description="Helical" evidence="1">
    <location>
        <begin position="435"/>
        <end position="455"/>
    </location>
</feature>
<feature type="topological domain" description="Cytoplasmic" evidence="1">
    <location>
        <begin position="456"/>
        <end position="512"/>
    </location>
</feature>
<feature type="region of interest" description="Disordered" evidence="2">
    <location>
        <begin position="468"/>
        <end position="512"/>
    </location>
</feature>
<feature type="compositionally biased region" description="Acidic residues" evidence="2">
    <location>
        <begin position="475"/>
        <end position="496"/>
    </location>
</feature>
<evidence type="ECO:0000255" key="1"/>
<evidence type="ECO:0000256" key="2">
    <source>
        <dbReference type="SAM" id="MobiDB-lite"/>
    </source>
</evidence>
<evidence type="ECO:0000269" key="3">
    <source>
    </source>
</evidence>
<evidence type="ECO:0000269" key="4">
    <source>
    </source>
</evidence>
<evidence type="ECO:0000269" key="5">
    <source>
    </source>
</evidence>
<evidence type="ECO:0000305" key="6"/>
<sequence length="512" mass="58256">MMKESKSITQHEVERESVSSKRAIKKRLLLFKIDLFVLSFVCLQYWINYVDRVGFTNAYISGMKEDLKMVGNDLTVSNTVFMIGYIVGMVPNNLMLLCVPPRIWLSFCTFAWGLLTLGMYKVTSFKHICAIRFFQALFESCTFSGTHFVLGSWYKEDELPIRSAIFTGSGLVGSMFSGFMQTSIFTHLNGRNGLAGWRWLFIIDFCITLPIAIYGFIFFPGLPDQTSAVSKFSMTRYIFNEQELHYARRRLPARDESTRLDWSTIPRVLKRWHWWMFSLVWVLGGENLGFASNSTFALWLQNQKYTLAQRNNYPSGIFAVGIVSTLCSAVYMSKIPRARHWHVSVFISLVMVIVAVLIRADPLNPKVVFSAQYLGGVAYAGQAVFFSWANIICHADLQERAIVLASMNMFSGAVNAWWSILFFASDMVPKFERGCYALLATAISSGIVSVVIRSLQIKENLSKKQVPYIDANDMPGEDDDDDNQDNENDGDDESMEVELHNEEMAEISNPFR</sequence>
<comment type="function">
    <text evidence="3 5">Transports pantothenate into the cell. Also involved in the catabolite repression-mediated regulation of ergosterol biosynthesis and in fenpropimorph resistance.</text>
</comment>
<comment type="subcellular location">
    <subcellularLocation>
        <location evidence="3">Cell membrane</location>
        <topology evidence="3">Multi-pass membrane protein</topology>
    </subcellularLocation>
</comment>
<comment type="miscellaneous">
    <text evidence="4">Present with 3060 molecules/cell in log phase SD medium.</text>
</comment>
<comment type="similarity">
    <text evidence="6">Belongs to the major facilitator superfamily. Allantoate permease family.</text>
</comment>